<dbReference type="EMBL" id="M36656">
    <property type="protein sequence ID" value="AAA42758.1"/>
    <property type="molecule type" value="Genomic_RNA"/>
</dbReference>
<dbReference type="PIR" id="S06399">
    <property type="entry name" value="VHIHN1"/>
</dbReference>
<dbReference type="SMR" id="P19902"/>
<dbReference type="GO" id="GO:0044172">
    <property type="term" value="C:host cell endoplasmic reticulum-Golgi intermediate compartment"/>
    <property type="evidence" value="ECO:0007669"/>
    <property type="project" value="UniProtKB-SubCell"/>
</dbReference>
<dbReference type="GO" id="GO:0044177">
    <property type="term" value="C:host cell Golgi apparatus"/>
    <property type="evidence" value="ECO:0007669"/>
    <property type="project" value="UniProtKB-SubCell"/>
</dbReference>
<dbReference type="GO" id="GO:1990904">
    <property type="term" value="C:ribonucleoprotein complex"/>
    <property type="evidence" value="ECO:0007669"/>
    <property type="project" value="UniProtKB-KW"/>
</dbReference>
<dbReference type="GO" id="GO:0019013">
    <property type="term" value="C:viral nucleocapsid"/>
    <property type="evidence" value="ECO:0007669"/>
    <property type="project" value="UniProtKB-UniRule"/>
</dbReference>
<dbReference type="GO" id="GO:0003723">
    <property type="term" value="F:RNA binding"/>
    <property type="evidence" value="ECO:0007669"/>
    <property type="project" value="UniProtKB-UniRule"/>
</dbReference>
<dbReference type="CDD" id="cd21595">
    <property type="entry name" value="CoV_N-CTD"/>
    <property type="match status" value="1"/>
</dbReference>
<dbReference type="CDD" id="cd21554">
    <property type="entry name" value="CoV_N-NTD"/>
    <property type="match status" value="1"/>
</dbReference>
<dbReference type="HAMAP" id="MF_04096">
    <property type="entry name" value="BETA_CORONA_NCAP"/>
    <property type="match status" value="1"/>
</dbReference>
<dbReference type="InterPro" id="IPR044344">
    <property type="entry name" value="N_prot_C_CoV"/>
</dbReference>
<dbReference type="InterPro" id="IPR044345">
    <property type="entry name" value="N_prot_N_CoV"/>
</dbReference>
<dbReference type="InterPro" id="IPR043505">
    <property type="entry name" value="NCAP_bCoV"/>
</dbReference>
<dbReference type="InterPro" id="IPR001218">
    <property type="entry name" value="Nucleocap_CoV"/>
</dbReference>
<dbReference type="InterPro" id="IPR037179">
    <property type="entry name" value="Nucleocapsid_C"/>
</dbReference>
<dbReference type="InterPro" id="IPR037195">
    <property type="entry name" value="Nucleocapsid_N"/>
</dbReference>
<dbReference type="Pfam" id="PF00937">
    <property type="entry name" value="CoV_nucleocap"/>
    <property type="match status" value="1"/>
</dbReference>
<dbReference type="PIRSF" id="PIRSF003888">
    <property type="entry name" value="Corona_nucleocap"/>
    <property type="match status" value="1"/>
</dbReference>
<dbReference type="SUPFAM" id="SSF110304">
    <property type="entry name" value="Coronavirus RNA-binding domain"/>
    <property type="match status" value="1"/>
</dbReference>
<dbReference type="SUPFAM" id="SSF103068">
    <property type="entry name" value="Nucleocapsid protein dimerization domain"/>
    <property type="match status" value="1"/>
</dbReference>
<dbReference type="PROSITE" id="PS51929">
    <property type="entry name" value="COV_N_CTD"/>
    <property type="match status" value="1"/>
</dbReference>
<dbReference type="PROSITE" id="PS51928">
    <property type="entry name" value="COV_N_NTD"/>
    <property type="match status" value="1"/>
</dbReference>
<organism>
    <name type="scientific">Bovine coronavirus (strain F15)</name>
    <name type="common">BCoV</name>
    <name type="synonym">BCV</name>
    <dbReference type="NCBI Taxonomy" id="11129"/>
    <lineage>
        <taxon>Viruses</taxon>
        <taxon>Riboviria</taxon>
        <taxon>Orthornavirae</taxon>
        <taxon>Pisuviricota</taxon>
        <taxon>Pisoniviricetes</taxon>
        <taxon>Nidovirales</taxon>
        <taxon>Cornidovirineae</taxon>
        <taxon>Coronaviridae</taxon>
        <taxon>Orthocoronavirinae</taxon>
        <taxon>Betacoronavirus</taxon>
        <taxon>Embecovirus</taxon>
        <taxon>Betacoronavirus 1</taxon>
    </lineage>
</organism>
<reference key="1">
    <citation type="journal article" date="1988" name="Ann. Inst. Pasteur Virol.">
        <title>Sequence and analysis of bovine enteritic coronavirus (F15) genome. I. Sequence of the gene coding for the nucleocapsid protein; analysis of the predicted protein.</title>
        <authorList>
            <person name="Cruciere C."/>
            <person name="Laporte J."/>
        </authorList>
    </citation>
    <scope>NUCLEOTIDE SEQUENCE [GENOMIC RNA]</scope>
</reference>
<organismHost>
    <name type="scientific">Bos taurus</name>
    <name type="common">Bovine</name>
    <dbReference type="NCBI Taxonomy" id="9913"/>
</organismHost>
<protein>
    <recommendedName>
        <fullName evidence="2">Nucleoprotein</fullName>
    </recommendedName>
    <alternativeName>
        <fullName evidence="2">Nucleocapsid protein</fullName>
        <shortName evidence="2">NC</shortName>
        <shortName evidence="2">Protein N</shortName>
    </alternativeName>
</protein>
<sequence>MSFTPGKQSSSRASSGNRSGNGILKWADQSDQSRNVQTRGRRAQPKQTATSQQPSGGNVVPYYSWFSGITQFQKGKEFEFAEGQGVPIAPGVPATEAKGYWYRHNRRSFKTRDGNQRQLLPRWYFYYLGTGPHAKDQYGTDIDGVFWVASNQADVNTPADILDRDPSSDEAIPTRFPPGTVLPQGYYIEGSGRSAPNSRSTSRASSRASSAGSRSRANSGNRTPTSGVTPDMADQIVSLVLAKLGKDATKPQQVTKQTAKEIRQKILNKPRQKRSPNKQCTVQQCFGKRGPNQNFGGGEMLKLGTSDPQFPILAELAPTAGAFFFGSRLELAKVQNLSGNLDEPQKDVYELRYNGAIRFDSTLSGFETIMKVLNENLNAYQQQDGMMNMSPKPQRQRGQKNGQGENDNISVAAPKSRVQQNKSRELTAEDISLLKKMDEPYTEDTSEI</sequence>
<proteinExistence type="inferred from homology"/>
<evidence type="ECO:0000250" key="1">
    <source>
        <dbReference type="UniProtKB" id="P0DTC9"/>
    </source>
</evidence>
<evidence type="ECO:0000255" key="2">
    <source>
        <dbReference type="HAMAP-Rule" id="MF_04096"/>
    </source>
</evidence>
<evidence type="ECO:0000255" key="3">
    <source>
        <dbReference type="PROSITE-ProRule" id="PRU01276"/>
    </source>
</evidence>
<evidence type="ECO:0000255" key="4">
    <source>
        <dbReference type="PROSITE-ProRule" id="PRU01277"/>
    </source>
</evidence>
<evidence type="ECO:0000256" key="5">
    <source>
        <dbReference type="SAM" id="MobiDB-lite"/>
    </source>
</evidence>
<comment type="function">
    <text evidence="2">Packages the positive strand viral genome RNA into a helical ribonucleocapsid (RNP) and plays a fundamental role during virion assembly through its interactions with the viral genome and membrane protein M. Plays an important role in enhancing the efficiency of subgenomic viral RNA transcription as well as viral replication.</text>
</comment>
<comment type="subunit">
    <text evidence="2">Homooligomer. Both monomeric and oligomeric forms interact with RNA. Interacts with protein M. Interacts with NSP3; this interaction serves to tether the genome to the newly translated replicase-transcriptase complex at a very early stage of infection.</text>
</comment>
<comment type="subcellular location">
    <subcellularLocation>
        <location evidence="2">Virion</location>
    </subcellularLocation>
    <subcellularLocation>
        <location evidence="2">Host endoplasmic reticulum-Golgi intermediate compartment</location>
    </subcellularLocation>
    <subcellularLocation>
        <location evidence="2">Host Golgi apparatus</location>
    </subcellularLocation>
    <text evidence="2">Located inside the virion, complexed with the viral RNA. Probably associates with ER-derived membranes where it participates in viral RNA synthesis and virus budding.</text>
</comment>
<comment type="PTM">
    <text evidence="2">ADP-ribosylated. The ADP-ribosylation is retained in the virion during infection.</text>
</comment>
<comment type="PTM">
    <text evidence="2">Phosphorylated on serine and threonine residues.</text>
</comment>
<comment type="similarity">
    <text evidence="2">Belongs to the betacoronavirus nucleocapsid protein family.</text>
</comment>
<gene>
    <name evidence="2" type="primary">N</name>
    <name type="ORF">7a</name>
</gene>
<accession>P19902</accession>
<name>NCAP_CVBF</name>
<keyword id="KW-0013">ADP-ribosylation</keyword>
<keyword id="KW-1040">Host Golgi apparatus</keyword>
<keyword id="KW-0597">Phosphoprotein</keyword>
<keyword id="KW-0687">Ribonucleoprotein</keyword>
<keyword id="KW-0694">RNA-binding</keyword>
<keyword id="KW-0804">Transcription</keyword>
<keyword id="KW-0805">Transcription regulation</keyword>
<keyword id="KW-0543">Viral nucleoprotein</keyword>
<keyword id="KW-0946">Virion</keyword>
<feature type="chain" id="PRO_0000105990" description="Nucleoprotein">
    <location>
        <begin position="1"/>
        <end position="448"/>
    </location>
</feature>
<feature type="domain" description="CoV N NTD" evidence="3">
    <location>
        <begin position="61"/>
        <end position="190"/>
    </location>
</feature>
<feature type="domain" description="CoV N CTD" evidence="4">
    <location>
        <begin position="259"/>
        <end position="384"/>
    </location>
</feature>
<feature type="region of interest" description="Disordered" evidence="5">
    <location>
        <begin position="1"/>
        <end position="55"/>
    </location>
</feature>
<feature type="region of interest" description="RNA-binding" evidence="2">
    <location>
        <begin position="52"/>
        <end position="194"/>
    </location>
</feature>
<feature type="region of interest" description="Disordered" evidence="5">
    <location>
        <begin position="157"/>
        <end position="231"/>
    </location>
</feature>
<feature type="region of interest" description="Dimerization" evidence="2">
    <location>
        <begin position="266"/>
        <end position="384"/>
    </location>
</feature>
<feature type="region of interest" description="Disordered" evidence="5">
    <location>
        <begin position="385"/>
        <end position="448"/>
    </location>
</feature>
<feature type="compositionally biased region" description="Low complexity" evidence="5">
    <location>
        <begin position="9"/>
        <end position="22"/>
    </location>
</feature>
<feature type="compositionally biased region" description="Polar residues" evidence="5">
    <location>
        <begin position="29"/>
        <end position="38"/>
    </location>
</feature>
<feature type="compositionally biased region" description="Polar residues" evidence="5">
    <location>
        <begin position="45"/>
        <end position="55"/>
    </location>
</feature>
<feature type="compositionally biased region" description="Low complexity" evidence="5">
    <location>
        <begin position="193"/>
        <end position="223"/>
    </location>
</feature>
<feature type="compositionally biased region" description="Polar residues" evidence="5">
    <location>
        <begin position="399"/>
        <end position="409"/>
    </location>
</feature>
<feature type="compositionally biased region" description="Basic and acidic residues" evidence="5">
    <location>
        <begin position="422"/>
        <end position="439"/>
    </location>
</feature>
<feature type="binding site" evidence="1">
    <location>
        <position position="106"/>
    </location>
    <ligand>
        <name>RNA</name>
        <dbReference type="ChEBI" id="CHEBI:33697"/>
    </ligand>
</feature>
<feature type="binding site" evidence="1">
    <location>
        <position position="122"/>
    </location>
    <ligand>
        <name>RNA</name>
        <dbReference type="ChEBI" id="CHEBI:33697"/>
    </ligand>
</feature>
<feature type="binding site" evidence="1">
    <location>
        <position position="164"/>
    </location>
    <ligand>
        <name>RNA</name>
        <dbReference type="ChEBI" id="CHEBI:33697"/>
    </ligand>
</feature>
<feature type="modified residue" description="Phosphoserine; by host" evidence="2">
    <location>
        <position position="167"/>
    </location>
</feature>
<feature type="modified residue" description="Phosphothreonine; by host" evidence="2">
    <location>
        <position position="174"/>
    </location>
</feature>
<feature type="modified residue" description="Phosphoserine; by host" evidence="2">
    <location>
        <position position="191"/>
    </location>
</feature>
<feature type="modified residue" description="Phosphoserine; by host" evidence="2">
    <location>
        <position position="390"/>
    </location>
</feature>
<feature type="modified residue" description="Phosphoserine; by host" evidence="2">
    <location>
        <position position="423"/>
    </location>
</feature>
<feature type="modified residue" description="Phosphothreonine; by host" evidence="2">
    <location>
        <position position="427"/>
    </location>
</feature>